<name>SSB1_CLOAB</name>
<dbReference type="EMBL" id="AE001437">
    <property type="protein sequence ID" value="AAK78921.1"/>
    <property type="molecule type" value="Genomic_DNA"/>
</dbReference>
<dbReference type="PIR" id="F97016">
    <property type="entry name" value="F97016"/>
</dbReference>
<dbReference type="RefSeq" id="NP_347581.1">
    <property type="nucleotide sequence ID" value="NC_003030.1"/>
</dbReference>
<dbReference type="RefSeq" id="WP_010964263.1">
    <property type="nucleotide sequence ID" value="NC_003030.1"/>
</dbReference>
<dbReference type="SMR" id="Q97KH4"/>
<dbReference type="STRING" id="272562.CA_C0945"/>
<dbReference type="KEGG" id="cac:CA_C0945"/>
<dbReference type="PATRIC" id="fig|272562.8.peg.1155"/>
<dbReference type="eggNOG" id="COG0629">
    <property type="taxonomic scope" value="Bacteria"/>
</dbReference>
<dbReference type="HOGENOM" id="CLU_078758_6_1_9"/>
<dbReference type="OrthoDB" id="9809878at2"/>
<dbReference type="Proteomes" id="UP000000814">
    <property type="component" value="Chromosome"/>
</dbReference>
<dbReference type="GO" id="GO:0009295">
    <property type="term" value="C:nucleoid"/>
    <property type="evidence" value="ECO:0007669"/>
    <property type="project" value="TreeGrafter"/>
</dbReference>
<dbReference type="GO" id="GO:0003697">
    <property type="term" value="F:single-stranded DNA binding"/>
    <property type="evidence" value="ECO:0007669"/>
    <property type="project" value="UniProtKB-UniRule"/>
</dbReference>
<dbReference type="GO" id="GO:0006260">
    <property type="term" value="P:DNA replication"/>
    <property type="evidence" value="ECO:0007669"/>
    <property type="project" value="InterPro"/>
</dbReference>
<dbReference type="CDD" id="cd04496">
    <property type="entry name" value="SSB_OBF"/>
    <property type="match status" value="1"/>
</dbReference>
<dbReference type="Gene3D" id="2.40.50.140">
    <property type="entry name" value="Nucleic acid-binding proteins"/>
    <property type="match status" value="1"/>
</dbReference>
<dbReference type="HAMAP" id="MF_00984">
    <property type="entry name" value="SSB"/>
    <property type="match status" value="1"/>
</dbReference>
<dbReference type="InterPro" id="IPR012340">
    <property type="entry name" value="NA-bd_OB-fold"/>
</dbReference>
<dbReference type="InterPro" id="IPR000424">
    <property type="entry name" value="Primosome_PriB/ssb"/>
</dbReference>
<dbReference type="InterPro" id="IPR011344">
    <property type="entry name" value="ssDNA-bd"/>
</dbReference>
<dbReference type="NCBIfam" id="TIGR00621">
    <property type="entry name" value="ssb"/>
    <property type="match status" value="1"/>
</dbReference>
<dbReference type="PANTHER" id="PTHR10302">
    <property type="entry name" value="SINGLE-STRANDED DNA-BINDING PROTEIN"/>
    <property type="match status" value="1"/>
</dbReference>
<dbReference type="PANTHER" id="PTHR10302:SF27">
    <property type="entry name" value="SINGLE-STRANDED DNA-BINDING PROTEIN"/>
    <property type="match status" value="1"/>
</dbReference>
<dbReference type="Pfam" id="PF00436">
    <property type="entry name" value="SSB"/>
    <property type="match status" value="1"/>
</dbReference>
<dbReference type="PIRSF" id="PIRSF002070">
    <property type="entry name" value="SSB"/>
    <property type="match status" value="1"/>
</dbReference>
<dbReference type="SUPFAM" id="SSF50249">
    <property type="entry name" value="Nucleic acid-binding proteins"/>
    <property type="match status" value="1"/>
</dbReference>
<dbReference type="PROSITE" id="PS50935">
    <property type="entry name" value="SSB"/>
    <property type="match status" value="1"/>
</dbReference>
<comment type="subunit">
    <text evidence="1">Homotetramer.</text>
</comment>
<protein>
    <recommendedName>
        <fullName evidence="1">Single-stranded DNA-binding protein 1</fullName>
        <shortName evidence="1">SSB 1</shortName>
    </recommendedName>
</protein>
<keyword id="KW-0238">DNA-binding</keyword>
<keyword id="KW-1185">Reference proteome</keyword>
<proteinExistence type="inferred from homology"/>
<feature type="chain" id="PRO_0000096028" description="Single-stranded DNA-binding protein 1">
    <location>
        <begin position="1"/>
        <end position="110"/>
    </location>
</feature>
<feature type="domain" description="SSB" evidence="1">
    <location>
        <begin position="1"/>
        <end position="104"/>
    </location>
</feature>
<organism>
    <name type="scientific">Clostridium acetobutylicum (strain ATCC 824 / DSM 792 / JCM 1419 / IAM 19013 / LMG 5710 / NBRC 13948 / NRRL B-527 / VKM B-1787 / 2291 / W)</name>
    <dbReference type="NCBI Taxonomy" id="272562"/>
    <lineage>
        <taxon>Bacteria</taxon>
        <taxon>Bacillati</taxon>
        <taxon>Bacillota</taxon>
        <taxon>Clostridia</taxon>
        <taxon>Eubacteriales</taxon>
        <taxon>Clostridiaceae</taxon>
        <taxon>Clostridium</taxon>
    </lineage>
</organism>
<reference key="1">
    <citation type="journal article" date="2001" name="J. Bacteriol.">
        <title>Genome sequence and comparative analysis of the solvent-producing bacterium Clostridium acetobutylicum.</title>
        <authorList>
            <person name="Noelling J."/>
            <person name="Breton G."/>
            <person name="Omelchenko M.V."/>
            <person name="Makarova K.S."/>
            <person name="Zeng Q."/>
            <person name="Gibson R."/>
            <person name="Lee H.M."/>
            <person name="Dubois J."/>
            <person name="Qiu D."/>
            <person name="Hitti J."/>
            <person name="Wolf Y.I."/>
            <person name="Tatusov R.L."/>
            <person name="Sabathe F."/>
            <person name="Doucette-Stamm L.A."/>
            <person name="Soucaille P."/>
            <person name="Daly M.J."/>
            <person name="Bennett G.N."/>
            <person name="Koonin E.V."/>
            <person name="Smith D.R."/>
        </authorList>
    </citation>
    <scope>NUCLEOTIDE SEQUENCE [LARGE SCALE GENOMIC DNA]</scope>
    <source>
        <strain>ATCC 824 / DSM 792 / JCM 1419 / IAM 19013 / LMG 5710 / NBRC 13948 / NRRL B-527 / VKM B-1787 / 2291 / W</strain>
    </source>
</reference>
<evidence type="ECO:0000255" key="1">
    <source>
        <dbReference type="HAMAP-Rule" id="MF_00984"/>
    </source>
</evidence>
<sequence length="110" mass="12524">MNKILLIGRMTKNPSIKQIETTGNNRCNFTIAVNRRVRNTNGENEADFIPVTVWGKTAENVARYMKKGYLVGVSGRLQVRTYQDVDGNRKYITEVVGEEVQFLETKKEAV</sequence>
<gene>
    <name type="primary">ssb1</name>
    <name type="ordered locus">CA_C0945</name>
</gene>
<accession>Q97KH4</accession>